<reference key="1">
    <citation type="journal article" date="2002" name="Proc. Natl. Acad. Sci. U.S.A.">
        <title>Genome sequence and comparative microarray analysis of serotype M18 group A Streptococcus strains associated with acute rheumatic fever outbreaks.</title>
        <authorList>
            <person name="Smoot J.C."/>
            <person name="Barbian K.D."/>
            <person name="Van Gompel J.J."/>
            <person name="Smoot L.M."/>
            <person name="Chaussee M.S."/>
            <person name="Sylva G.L."/>
            <person name="Sturdevant D.E."/>
            <person name="Ricklefs S.M."/>
            <person name="Porcella S.F."/>
            <person name="Parkins L.D."/>
            <person name="Beres S.B."/>
            <person name="Campbell D.S."/>
            <person name="Smith T.M."/>
            <person name="Zhang Q."/>
            <person name="Kapur V."/>
            <person name="Daly J.A."/>
            <person name="Veasy L.G."/>
            <person name="Musser J.M."/>
        </authorList>
    </citation>
    <scope>NUCLEOTIDE SEQUENCE [LARGE SCALE GENOMIC DNA]</scope>
    <source>
        <strain>MGAS8232</strain>
    </source>
</reference>
<gene>
    <name evidence="1" type="primary">rsmI</name>
    <name type="ordered locus">spyM18_0456</name>
</gene>
<accession>Q8P2A6</accession>
<proteinExistence type="inferred from homology"/>
<organism>
    <name type="scientific">Streptococcus pyogenes serotype M18 (strain MGAS8232)</name>
    <dbReference type="NCBI Taxonomy" id="186103"/>
    <lineage>
        <taxon>Bacteria</taxon>
        <taxon>Bacillati</taxon>
        <taxon>Bacillota</taxon>
        <taxon>Bacilli</taxon>
        <taxon>Lactobacillales</taxon>
        <taxon>Streptococcaceae</taxon>
        <taxon>Streptococcus</taxon>
    </lineage>
</organism>
<feature type="chain" id="PRO_0000211957" description="Ribosomal RNA small subunit methyltransferase I">
    <location>
        <begin position="1"/>
        <end position="287"/>
    </location>
</feature>
<keyword id="KW-0963">Cytoplasm</keyword>
<keyword id="KW-0489">Methyltransferase</keyword>
<keyword id="KW-0698">rRNA processing</keyword>
<keyword id="KW-0949">S-adenosyl-L-methionine</keyword>
<keyword id="KW-0808">Transferase</keyword>
<name>RSMI_STRP8</name>
<sequence length="287" mass="31826">MQVQKSFKDKKTSGTLYLVPTPIGNLQDMTFRAVATLKEVDFICAEDTRNTGLLLKHFDIATKQISFHEHNAYEKIPDLIDLLISGRSLAQVSDAGMPSISDPGHDLVKAAIDSDIAVVALPGASAGITALIASGLAPQPHVFYGFLSRKAGQQKAFFEDKHHYPETQMFYESPYRIKDTLTNMLACYGDRQVVLVRELTKLFEEYQRGSISEILSYLEETSLKGECLLIVAGAQVDSEVELTADVDLVSLVQKEIQAGAKPNQAIKTIAKAYQVNRQELYQQFHDL</sequence>
<evidence type="ECO:0000255" key="1">
    <source>
        <dbReference type="HAMAP-Rule" id="MF_01877"/>
    </source>
</evidence>
<protein>
    <recommendedName>
        <fullName evidence="1">Ribosomal RNA small subunit methyltransferase I</fullName>
        <ecNumber evidence="1">2.1.1.198</ecNumber>
    </recommendedName>
    <alternativeName>
        <fullName evidence="1">16S rRNA 2'-O-ribose C1402 methyltransferase</fullName>
    </alternativeName>
    <alternativeName>
        <fullName evidence="1">rRNA (cytidine-2'-O-)-methyltransferase RsmI</fullName>
    </alternativeName>
</protein>
<comment type="function">
    <text evidence="1">Catalyzes the 2'-O-methylation of the ribose of cytidine 1402 (C1402) in 16S rRNA.</text>
</comment>
<comment type="catalytic activity">
    <reaction evidence="1">
        <text>cytidine(1402) in 16S rRNA + S-adenosyl-L-methionine = 2'-O-methylcytidine(1402) in 16S rRNA + S-adenosyl-L-homocysteine + H(+)</text>
        <dbReference type="Rhea" id="RHEA:42924"/>
        <dbReference type="Rhea" id="RHEA-COMP:10285"/>
        <dbReference type="Rhea" id="RHEA-COMP:10286"/>
        <dbReference type="ChEBI" id="CHEBI:15378"/>
        <dbReference type="ChEBI" id="CHEBI:57856"/>
        <dbReference type="ChEBI" id="CHEBI:59789"/>
        <dbReference type="ChEBI" id="CHEBI:74495"/>
        <dbReference type="ChEBI" id="CHEBI:82748"/>
        <dbReference type="EC" id="2.1.1.198"/>
    </reaction>
</comment>
<comment type="subcellular location">
    <subcellularLocation>
        <location evidence="1">Cytoplasm</location>
    </subcellularLocation>
</comment>
<comment type="similarity">
    <text evidence="1">Belongs to the methyltransferase superfamily. RsmI family.</text>
</comment>
<dbReference type="EC" id="2.1.1.198" evidence="1"/>
<dbReference type="EMBL" id="AE009949">
    <property type="protein sequence ID" value="AAL97189.1"/>
    <property type="molecule type" value="Genomic_DNA"/>
</dbReference>
<dbReference type="RefSeq" id="WP_011017425.1">
    <property type="nucleotide sequence ID" value="NC_003485.1"/>
</dbReference>
<dbReference type="SMR" id="Q8P2A6"/>
<dbReference type="KEGG" id="spm:spyM18_0456"/>
<dbReference type="HOGENOM" id="CLU_044779_1_0_9"/>
<dbReference type="GO" id="GO:0005737">
    <property type="term" value="C:cytoplasm"/>
    <property type="evidence" value="ECO:0007669"/>
    <property type="project" value="UniProtKB-SubCell"/>
</dbReference>
<dbReference type="GO" id="GO:0070677">
    <property type="term" value="F:rRNA (cytosine-2'-O-)-methyltransferase activity"/>
    <property type="evidence" value="ECO:0007669"/>
    <property type="project" value="UniProtKB-UniRule"/>
</dbReference>
<dbReference type="CDD" id="cd11648">
    <property type="entry name" value="RsmI"/>
    <property type="match status" value="1"/>
</dbReference>
<dbReference type="FunFam" id="3.30.950.10:FF:000002">
    <property type="entry name" value="Ribosomal RNA small subunit methyltransferase I"/>
    <property type="match status" value="1"/>
</dbReference>
<dbReference type="FunFam" id="3.40.1010.10:FF:000002">
    <property type="entry name" value="Ribosomal RNA small subunit methyltransferase I"/>
    <property type="match status" value="1"/>
</dbReference>
<dbReference type="Gene3D" id="3.40.1010.10">
    <property type="entry name" value="Cobalt-precorrin-4 Transmethylase, Domain 1"/>
    <property type="match status" value="1"/>
</dbReference>
<dbReference type="Gene3D" id="3.30.950.10">
    <property type="entry name" value="Methyltransferase, Cobalt-precorrin-4 Transmethylase, Domain 2"/>
    <property type="match status" value="1"/>
</dbReference>
<dbReference type="HAMAP" id="MF_01877">
    <property type="entry name" value="16SrRNA_methyltr_I"/>
    <property type="match status" value="1"/>
</dbReference>
<dbReference type="InterPro" id="IPR000878">
    <property type="entry name" value="4pyrrol_Mease"/>
</dbReference>
<dbReference type="InterPro" id="IPR035996">
    <property type="entry name" value="4pyrrol_Methylase_sf"/>
</dbReference>
<dbReference type="InterPro" id="IPR014777">
    <property type="entry name" value="4pyrrole_Mease_sub1"/>
</dbReference>
<dbReference type="InterPro" id="IPR014776">
    <property type="entry name" value="4pyrrole_Mease_sub2"/>
</dbReference>
<dbReference type="InterPro" id="IPR008189">
    <property type="entry name" value="rRNA_ssu_MeTfrase_I"/>
</dbReference>
<dbReference type="InterPro" id="IPR018063">
    <property type="entry name" value="SAM_MeTrfase_RsmI_CS"/>
</dbReference>
<dbReference type="NCBIfam" id="TIGR00096">
    <property type="entry name" value="16S rRNA (cytidine(1402)-2'-O)-methyltransferase"/>
    <property type="match status" value="1"/>
</dbReference>
<dbReference type="PANTHER" id="PTHR46111">
    <property type="entry name" value="RIBOSOMAL RNA SMALL SUBUNIT METHYLTRANSFERASE I"/>
    <property type="match status" value="1"/>
</dbReference>
<dbReference type="PANTHER" id="PTHR46111:SF1">
    <property type="entry name" value="RIBOSOMAL RNA SMALL SUBUNIT METHYLTRANSFERASE I"/>
    <property type="match status" value="1"/>
</dbReference>
<dbReference type="Pfam" id="PF00590">
    <property type="entry name" value="TP_methylase"/>
    <property type="match status" value="1"/>
</dbReference>
<dbReference type="PIRSF" id="PIRSF005917">
    <property type="entry name" value="MTase_YraL"/>
    <property type="match status" value="1"/>
</dbReference>
<dbReference type="SUPFAM" id="SSF53790">
    <property type="entry name" value="Tetrapyrrole methylase"/>
    <property type="match status" value="1"/>
</dbReference>
<dbReference type="PROSITE" id="PS01296">
    <property type="entry name" value="RSMI"/>
    <property type="match status" value="1"/>
</dbReference>